<name>LPXA_BURA4</name>
<evidence type="ECO:0000255" key="1">
    <source>
        <dbReference type="HAMAP-Rule" id="MF_00387"/>
    </source>
</evidence>
<reference key="1">
    <citation type="submission" date="2008-04" db="EMBL/GenBank/DDBJ databases">
        <title>Complete sequence of chromosome 1 of Burkholderia ambifaria MC40-6.</title>
        <authorList>
            <person name="Copeland A."/>
            <person name="Lucas S."/>
            <person name="Lapidus A."/>
            <person name="Glavina del Rio T."/>
            <person name="Dalin E."/>
            <person name="Tice H."/>
            <person name="Pitluck S."/>
            <person name="Chain P."/>
            <person name="Malfatti S."/>
            <person name="Shin M."/>
            <person name="Vergez L."/>
            <person name="Lang D."/>
            <person name="Schmutz J."/>
            <person name="Larimer F."/>
            <person name="Land M."/>
            <person name="Hauser L."/>
            <person name="Kyrpides N."/>
            <person name="Lykidis A."/>
            <person name="Ramette A."/>
            <person name="Konstantinidis K."/>
            <person name="Tiedje J."/>
            <person name="Richardson P."/>
        </authorList>
    </citation>
    <scope>NUCLEOTIDE SEQUENCE [LARGE SCALE GENOMIC DNA]</scope>
    <source>
        <strain>MC40-6</strain>
    </source>
</reference>
<comment type="function">
    <text evidence="1">Involved in the biosynthesis of lipid A, a phosphorylated glycolipid that anchors the lipopolysaccharide to the outer membrane of the cell.</text>
</comment>
<comment type="catalytic activity">
    <reaction evidence="1">
        <text>a (3R)-hydroxyacyl-[ACP] + UDP-N-acetyl-alpha-D-glucosamine = a UDP-3-O-[(3R)-3-hydroxyacyl]-N-acetyl-alpha-D-glucosamine + holo-[ACP]</text>
        <dbReference type="Rhea" id="RHEA:67812"/>
        <dbReference type="Rhea" id="RHEA-COMP:9685"/>
        <dbReference type="Rhea" id="RHEA-COMP:9945"/>
        <dbReference type="ChEBI" id="CHEBI:57705"/>
        <dbReference type="ChEBI" id="CHEBI:64479"/>
        <dbReference type="ChEBI" id="CHEBI:78827"/>
        <dbReference type="ChEBI" id="CHEBI:173225"/>
        <dbReference type="EC" id="2.3.1.129"/>
    </reaction>
</comment>
<comment type="pathway">
    <text evidence="1">Glycolipid biosynthesis; lipid IV(A) biosynthesis; lipid IV(A) from (3R)-3-hydroxytetradecanoyl-[acyl-carrier-protein] and UDP-N-acetyl-alpha-D-glucosamine: step 1/6.</text>
</comment>
<comment type="subunit">
    <text evidence="1">Homotrimer.</text>
</comment>
<comment type="subcellular location">
    <subcellularLocation>
        <location evidence="1">Cytoplasm</location>
    </subcellularLocation>
</comment>
<comment type="similarity">
    <text evidence="1">Belongs to the transferase hexapeptide repeat family. LpxA subfamily.</text>
</comment>
<gene>
    <name evidence="1" type="primary">lpxA</name>
    <name type="ordered locus">BamMC406_1909</name>
</gene>
<protein>
    <recommendedName>
        <fullName evidence="1">Acyl-[acyl-carrier-protein]--UDP-N-acetylglucosamine O-acyltransferase</fullName>
        <shortName evidence="1">UDP-N-acetylglucosamine acyltransferase</shortName>
        <ecNumber evidence="1">2.3.1.129</ecNumber>
    </recommendedName>
</protein>
<feature type="chain" id="PRO_1000122687" description="Acyl-[acyl-carrier-protein]--UDP-N-acetylglucosamine O-acyltransferase">
    <location>
        <begin position="1"/>
        <end position="262"/>
    </location>
</feature>
<sequence length="262" mass="27893">MTRIHPTAIVEPGAQIDESVEIGPYAIVGPHVTIGARTTIGSHSVIEGHTTLGEDNRIGHYASVGGRPQDMKYKDEPTKLVIGNRNTIREFTTIHTGTVQDVGVTTLGDDNWIMAYVHIGHDCRVGNNVILSSNAQMAGHVEIGDYAIIGGMSGVHQFVRIGAHSMLGGASALVQDVPPFVIAAGNKAEPHGINVEGLRRRGFSPDAISALRSAYRLLYKNGLSLEEAKVQLRELAVAGGEGDAAVTAFVEFIDASQRGIIR</sequence>
<accession>B1YS62</accession>
<organism>
    <name type="scientific">Burkholderia ambifaria (strain MC40-6)</name>
    <dbReference type="NCBI Taxonomy" id="398577"/>
    <lineage>
        <taxon>Bacteria</taxon>
        <taxon>Pseudomonadati</taxon>
        <taxon>Pseudomonadota</taxon>
        <taxon>Betaproteobacteria</taxon>
        <taxon>Burkholderiales</taxon>
        <taxon>Burkholderiaceae</taxon>
        <taxon>Burkholderia</taxon>
        <taxon>Burkholderia cepacia complex</taxon>
    </lineage>
</organism>
<keyword id="KW-0012">Acyltransferase</keyword>
<keyword id="KW-0963">Cytoplasm</keyword>
<keyword id="KW-0441">Lipid A biosynthesis</keyword>
<keyword id="KW-0444">Lipid biosynthesis</keyword>
<keyword id="KW-0443">Lipid metabolism</keyword>
<keyword id="KW-0677">Repeat</keyword>
<keyword id="KW-0808">Transferase</keyword>
<dbReference type="EC" id="2.3.1.129" evidence="1"/>
<dbReference type="EMBL" id="CP001025">
    <property type="protein sequence ID" value="ACB64391.1"/>
    <property type="molecule type" value="Genomic_DNA"/>
</dbReference>
<dbReference type="RefSeq" id="WP_012364129.1">
    <property type="nucleotide sequence ID" value="NC_010551.1"/>
</dbReference>
<dbReference type="SMR" id="B1YS62"/>
<dbReference type="KEGG" id="bac:BamMC406_1909"/>
<dbReference type="HOGENOM" id="CLU_061249_0_0_4"/>
<dbReference type="OrthoDB" id="9807278at2"/>
<dbReference type="UniPathway" id="UPA00359">
    <property type="reaction ID" value="UER00477"/>
</dbReference>
<dbReference type="Proteomes" id="UP000001680">
    <property type="component" value="Chromosome 1"/>
</dbReference>
<dbReference type="GO" id="GO:0005737">
    <property type="term" value="C:cytoplasm"/>
    <property type="evidence" value="ECO:0007669"/>
    <property type="project" value="UniProtKB-SubCell"/>
</dbReference>
<dbReference type="GO" id="GO:0016020">
    <property type="term" value="C:membrane"/>
    <property type="evidence" value="ECO:0007669"/>
    <property type="project" value="GOC"/>
</dbReference>
<dbReference type="GO" id="GO:0008780">
    <property type="term" value="F:acyl-[acyl-carrier-protein]-UDP-N-acetylglucosamine O-acyltransferase activity"/>
    <property type="evidence" value="ECO:0007669"/>
    <property type="project" value="UniProtKB-UniRule"/>
</dbReference>
<dbReference type="GO" id="GO:0009245">
    <property type="term" value="P:lipid A biosynthetic process"/>
    <property type="evidence" value="ECO:0007669"/>
    <property type="project" value="UniProtKB-UniRule"/>
</dbReference>
<dbReference type="CDD" id="cd03351">
    <property type="entry name" value="LbH_UDP-GlcNAc_AT"/>
    <property type="match status" value="1"/>
</dbReference>
<dbReference type="Gene3D" id="2.160.10.10">
    <property type="entry name" value="Hexapeptide repeat proteins"/>
    <property type="match status" value="1"/>
</dbReference>
<dbReference type="Gene3D" id="1.20.1180.10">
    <property type="entry name" value="Udp N-acetylglucosamine O-acyltransferase, C-terminal domain"/>
    <property type="match status" value="1"/>
</dbReference>
<dbReference type="HAMAP" id="MF_00387">
    <property type="entry name" value="LpxA"/>
    <property type="match status" value="1"/>
</dbReference>
<dbReference type="InterPro" id="IPR029098">
    <property type="entry name" value="Acetyltransf_C"/>
</dbReference>
<dbReference type="InterPro" id="IPR037157">
    <property type="entry name" value="Acetyltransf_C_sf"/>
</dbReference>
<dbReference type="InterPro" id="IPR001451">
    <property type="entry name" value="Hexapep"/>
</dbReference>
<dbReference type="InterPro" id="IPR010137">
    <property type="entry name" value="Lipid_A_LpxA"/>
</dbReference>
<dbReference type="InterPro" id="IPR011004">
    <property type="entry name" value="Trimer_LpxA-like_sf"/>
</dbReference>
<dbReference type="NCBIfam" id="TIGR01852">
    <property type="entry name" value="lipid_A_lpxA"/>
    <property type="match status" value="1"/>
</dbReference>
<dbReference type="NCBIfam" id="NF003657">
    <property type="entry name" value="PRK05289.1"/>
    <property type="match status" value="1"/>
</dbReference>
<dbReference type="PANTHER" id="PTHR43480">
    <property type="entry name" value="ACYL-[ACYL-CARRIER-PROTEIN]--UDP-N-ACETYLGLUCOSAMINE O-ACYLTRANSFERASE"/>
    <property type="match status" value="1"/>
</dbReference>
<dbReference type="PANTHER" id="PTHR43480:SF1">
    <property type="entry name" value="ACYL-[ACYL-CARRIER-PROTEIN]--UDP-N-ACETYLGLUCOSAMINE O-ACYLTRANSFERASE, MITOCHONDRIAL-RELATED"/>
    <property type="match status" value="1"/>
</dbReference>
<dbReference type="Pfam" id="PF13720">
    <property type="entry name" value="Acetyltransf_11"/>
    <property type="match status" value="1"/>
</dbReference>
<dbReference type="Pfam" id="PF00132">
    <property type="entry name" value="Hexapep"/>
    <property type="match status" value="2"/>
</dbReference>
<dbReference type="PIRSF" id="PIRSF000456">
    <property type="entry name" value="UDP-GlcNAc_acltr"/>
    <property type="match status" value="1"/>
</dbReference>
<dbReference type="SUPFAM" id="SSF51161">
    <property type="entry name" value="Trimeric LpxA-like enzymes"/>
    <property type="match status" value="1"/>
</dbReference>
<dbReference type="PROSITE" id="PS00101">
    <property type="entry name" value="HEXAPEP_TRANSFERASES"/>
    <property type="match status" value="1"/>
</dbReference>
<proteinExistence type="inferred from homology"/>